<sequence>MVHLGPKPPQHRKGSFLDVPEYLLKELTELEGLLTVSGETLRKITDHFISELEKGLSKQGGNIPMIPGWVMDFPTGKEMGDYLAIDLGGTNLRVVLVKLGGNRDFDTTQSKFALPENMRTAKSEELWEFIAECLQKFVEEEFRNGVLSNLPLGFTFSYPASQGSINEGYLQRWTKGFDIEGVEGHDVVPMLQAAIEKRKVPIEVVALINDTTGTLVASMYTDPEAKMGLFSGTGCNGAYYDVVDNIPKLEGKVPDDIKSSSPMAINCEYGAFDNEHIILPRTKYDIQIDEESPRPGQQAFEKMISGYYLGEVLRLILLDLTSKQLIFKDQDLSKLQVPFILDTSIPARIEEDPFENLSDVQELFQEILGIQTTSPERKIIRRLAELIGERSARLSICGIAAICKKRGYKTAHCAADGSVYNKYPGFKERAAKGLRDIFQWESEEDPIVIVPAEDGLGAGAAIIAALTEKRLKDGLPLV</sequence>
<organism>
    <name type="scientific">Schwanniomyces occidentalis</name>
    <name type="common">Yeast</name>
    <name type="synonym">Debaryomyces occidentalis</name>
    <dbReference type="NCBI Taxonomy" id="27300"/>
    <lineage>
        <taxon>Eukaryota</taxon>
        <taxon>Fungi</taxon>
        <taxon>Dikarya</taxon>
        <taxon>Ascomycota</taxon>
        <taxon>Saccharomycotina</taxon>
        <taxon>Pichiomycetes</taxon>
        <taxon>Debaryomycetaceae</taxon>
        <taxon>Schwanniomyces</taxon>
    </lineage>
</organism>
<gene>
    <name type="primary">HXK</name>
</gene>
<accession>P50506</accession>
<proteinExistence type="inferred from homology"/>
<dbReference type="EC" id="2.7.1.1" evidence="2"/>
<dbReference type="EMBL" id="S78714">
    <property type="protein sequence ID" value="AAB34892.1"/>
    <property type="molecule type" value="Genomic_DNA"/>
</dbReference>
<dbReference type="PIR" id="S57203">
    <property type="entry name" value="S57203"/>
</dbReference>
<dbReference type="SMR" id="P50506"/>
<dbReference type="UniPathway" id="UPA00109">
    <property type="reaction ID" value="UER00180"/>
</dbReference>
<dbReference type="UniPathway" id="UPA00242"/>
<dbReference type="GO" id="GO:0005829">
    <property type="term" value="C:cytosol"/>
    <property type="evidence" value="ECO:0007669"/>
    <property type="project" value="TreeGrafter"/>
</dbReference>
<dbReference type="GO" id="GO:0005739">
    <property type="term" value="C:mitochondrion"/>
    <property type="evidence" value="ECO:0007669"/>
    <property type="project" value="TreeGrafter"/>
</dbReference>
<dbReference type="GO" id="GO:0005524">
    <property type="term" value="F:ATP binding"/>
    <property type="evidence" value="ECO:0007669"/>
    <property type="project" value="UniProtKB-KW"/>
</dbReference>
<dbReference type="GO" id="GO:0005536">
    <property type="term" value="F:D-glucose binding"/>
    <property type="evidence" value="ECO:0007669"/>
    <property type="project" value="InterPro"/>
</dbReference>
<dbReference type="GO" id="GO:0008865">
    <property type="term" value="F:fructokinase activity"/>
    <property type="evidence" value="ECO:0007669"/>
    <property type="project" value="TreeGrafter"/>
</dbReference>
<dbReference type="GO" id="GO:0004340">
    <property type="term" value="F:glucokinase activity"/>
    <property type="evidence" value="ECO:0007669"/>
    <property type="project" value="TreeGrafter"/>
</dbReference>
<dbReference type="GO" id="GO:0019158">
    <property type="term" value="F:mannokinase activity"/>
    <property type="evidence" value="ECO:0007669"/>
    <property type="project" value="TreeGrafter"/>
</dbReference>
<dbReference type="GO" id="GO:0006006">
    <property type="term" value="P:glucose metabolic process"/>
    <property type="evidence" value="ECO:0007669"/>
    <property type="project" value="TreeGrafter"/>
</dbReference>
<dbReference type="GO" id="GO:0006096">
    <property type="term" value="P:glycolytic process"/>
    <property type="evidence" value="ECO:0007669"/>
    <property type="project" value="UniProtKB-UniPathway"/>
</dbReference>
<dbReference type="GO" id="GO:0001678">
    <property type="term" value="P:intracellular glucose homeostasis"/>
    <property type="evidence" value="ECO:0007669"/>
    <property type="project" value="InterPro"/>
</dbReference>
<dbReference type="GO" id="GO:0006013">
    <property type="term" value="P:mannose metabolic process"/>
    <property type="evidence" value="ECO:0007669"/>
    <property type="project" value="TreeGrafter"/>
</dbReference>
<dbReference type="CDD" id="cd24087">
    <property type="entry name" value="ASKHA_NBD_HK1-2_fungi"/>
    <property type="match status" value="1"/>
</dbReference>
<dbReference type="FunFam" id="3.30.420.40:FF:000092">
    <property type="entry name" value="Phosphotransferase"/>
    <property type="match status" value="1"/>
</dbReference>
<dbReference type="FunFam" id="3.40.367.20:FF:000004">
    <property type="entry name" value="Phosphotransferase"/>
    <property type="match status" value="1"/>
</dbReference>
<dbReference type="Gene3D" id="1.10.287.1250">
    <property type="match status" value="1"/>
</dbReference>
<dbReference type="Gene3D" id="3.30.420.40">
    <property type="match status" value="1"/>
</dbReference>
<dbReference type="Gene3D" id="3.40.367.20">
    <property type="match status" value="1"/>
</dbReference>
<dbReference type="InterPro" id="IPR043129">
    <property type="entry name" value="ATPase_NBD"/>
</dbReference>
<dbReference type="InterPro" id="IPR001312">
    <property type="entry name" value="Hexokinase"/>
</dbReference>
<dbReference type="InterPro" id="IPR019807">
    <property type="entry name" value="Hexokinase_BS"/>
</dbReference>
<dbReference type="InterPro" id="IPR022673">
    <property type="entry name" value="Hexokinase_C"/>
</dbReference>
<dbReference type="InterPro" id="IPR022672">
    <property type="entry name" value="Hexokinase_N"/>
</dbReference>
<dbReference type="PANTHER" id="PTHR19443">
    <property type="entry name" value="HEXOKINASE"/>
    <property type="match status" value="1"/>
</dbReference>
<dbReference type="PANTHER" id="PTHR19443:SF16">
    <property type="entry name" value="HEXOKINASE TYPE 1-RELATED"/>
    <property type="match status" value="1"/>
</dbReference>
<dbReference type="Pfam" id="PF00349">
    <property type="entry name" value="Hexokinase_1"/>
    <property type="match status" value="1"/>
</dbReference>
<dbReference type="Pfam" id="PF03727">
    <property type="entry name" value="Hexokinase_2"/>
    <property type="match status" value="1"/>
</dbReference>
<dbReference type="PRINTS" id="PR00475">
    <property type="entry name" value="HEXOKINASE"/>
</dbReference>
<dbReference type="SUPFAM" id="SSF53067">
    <property type="entry name" value="Actin-like ATPase domain"/>
    <property type="match status" value="2"/>
</dbReference>
<dbReference type="PROSITE" id="PS00378">
    <property type="entry name" value="HEXOKINASE_1"/>
    <property type="match status" value="1"/>
</dbReference>
<dbReference type="PROSITE" id="PS51748">
    <property type="entry name" value="HEXOKINASE_2"/>
    <property type="match status" value="1"/>
</dbReference>
<keyword id="KW-0021">Allosteric enzyme</keyword>
<keyword id="KW-0067">ATP-binding</keyword>
<keyword id="KW-0324">Glycolysis</keyword>
<keyword id="KW-0418">Kinase</keyword>
<keyword id="KW-0547">Nucleotide-binding</keyword>
<keyword id="KW-0808">Transferase</keyword>
<name>HXK_SCHOC</name>
<comment type="function">
    <text evidence="2">Catalyzes the phosphorylation of hexose, such as D-glucose and D-fructose, to hexose 6-phosphate (D-glucose 6-phosphate and D-fructose 6-phosphate, respectively). Mediates the initial step of glycolysis by catalyzing phosphorylation of D-glucose to D-glucose 6-phosphate.</text>
</comment>
<comment type="catalytic activity">
    <reaction evidence="2">
        <text>a D-hexose + ATP = a D-hexose 6-phosphate + ADP + H(+)</text>
        <dbReference type="Rhea" id="RHEA:22740"/>
        <dbReference type="ChEBI" id="CHEBI:4194"/>
        <dbReference type="ChEBI" id="CHEBI:15378"/>
        <dbReference type="ChEBI" id="CHEBI:30616"/>
        <dbReference type="ChEBI" id="CHEBI:229467"/>
        <dbReference type="ChEBI" id="CHEBI:456216"/>
        <dbReference type="EC" id="2.7.1.1"/>
    </reaction>
    <physiologicalReaction direction="left-to-right" evidence="2">
        <dbReference type="Rhea" id="RHEA:22741"/>
    </physiologicalReaction>
</comment>
<comment type="catalytic activity">
    <reaction evidence="2">
        <text>D-fructose + ATP = D-fructose 6-phosphate + ADP + H(+)</text>
        <dbReference type="Rhea" id="RHEA:16125"/>
        <dbReference type="ChEBI" id="CHEBI:15378"/>
        <dbReference type="ChEBI" id="CHEBI:30616"/>
        <dbReference type="ChEBI" id="CHEBI:37721"/>
        <dbReference type="ChEBI" id="CHEBI:61527"/>
        <dbReference type="ChEBI" id="CHEBI:456216"/>
        <dbReference type="EC" id="2.7.1.1"/>
    </reaction>
    <physiologicalReaction direction="left-to-right" evidence="2">
        <dbReference type="Rhea" id="RHEA:16126"/>
    </physiologicalReaction>
</comment>
<comment type="catalytic activity">
    <reaction evidence="2">
        <text>D-glucose + ATP = D-glucose 6-phosphate + ADP + H(+)</text>
        <dbReference type="Rhea" id="RHEA:17825"/>
        <dbReference type="ChEBI" id="CHEBI:4167"/>
        <dbReference type="ChEBI" id="CHEBI:15378"/>
        <dbReference type="ChEBI" id="CHEBI:30616"/>
        <dbReference type="ChEBI" id="CHEBI:61548"/>
        <dbReference type="ChEBI" id="CHEBI:456216"/>
        <dbReference type="EC" id="2.7.1.1"/>
    </reaction>
</comment>
<comment type="pathway">
    <text evidence="2">Carbohydrate metabolism; hexose metabolism.</text>
</comment>
<comment type="pathway">
    <text evidence="2">Carbohydrate degradation; glycolysis; D-glyceraldehyde 3-phosphate and glycerone phosphate from D-glucose: step 1/4.</text>
</comment>
<comment type="subunit">
    <text evidence="2">Monomer.</text>
</comment>
<comment type="similarity">
    <text evidence="4 5">Belongs to the hexokinase family.</text>
</comment>
<reference key="1">
    <citation type="journal article" date="1995" name="Curr. Genet.">
        <title>Molecular and biochemical characterization of the hexokinase from the starch-utilizing yeast Schwanniomyces occidentalis.</title>
        <authorList>
            <person name="Rose M."/>
        </authorList>
    </citation>
    <scope>NUCLEOTIDE SEQUENCE [GENOMIC DNA]</scope>
    <source>
        <strain>ATCC 2322 / CBS 819 / JCM 8123 / NBRC 1841 / NRRL Y-10 / BCRC 22052</strain>
    </source>
</reference>
<feature type="chain" id="PRO_0000197606" description="Hexokinase">
    <location>
        <begin position="1"/>
        <end position="478"/>
    </location>
</feature>
<feature type="domain" description="Hexokinase" evidence="4">
    <location>
        <begin position="21"/>
        <end position="465"/>
    </location>
</feature>
<feature type="region of interest" description="Hexokinase small subdomain" evidence="4">
    <location>
        <begin position="75"/>
        <end position="208"/>
    </location>
</feature>
<feature type="region of interest" description="Glucose-binding" evidence="3">
    <location>
        <begin position="151"/>
        <end position="177"/>
    </location>
</feature>
<feature type="region of interest" description="Hexokinase large subdomain" evidence="4">
    <location>
        <begin position="209"/>
        <end position="454"/>
    </location>
</feature>
<feature type="binding site" evidence="1">
    <location>
        <position position="111"/>
    </location>
    <ligand>
        <name>ATP</name>
        <dbReference type="ChEBI" id="CHEBI:30616"/>
    </ligand>
</feature>
<evidence type="ECO:0000250" key="1"/>
<evidence type="ECO:0000250" key="2">
    <source>
        <dbReference type="UniProtKB" id="P33284"/>
    </source>
</evidence>
<evidence type="ECO:0000255" key="3"/>
<evidence type="ECO:0000255" key="4">
    <source>
        <dbReference type="PROSITE-ProRule" id="PRU01084"/>
    </source>
</evidence>
<evidence type="ECO:0000305" key="5"/>
<protein>
    <recommendedName>
        <fullName>Hexokinase</fullName>
        <ecNumber evidence="2">2.7.1.1</ecNumber>
    </recommendedName>
</protein>